<comment type="function">
    <text evidence="3">Core component of nucleosome. Nucleosomes wrap and compact DNA into chromatin, limiting DNA accessibility to the cellular machineries which require DNA as a template. Histones thereby play a central role in transcription regulation, DNA repair, DNA replication and chromosomal stability. DNA accessibility is regulated via a complex set of post-translational modifications of histones, also called histone code, and nucleosome remodeling.</text>
</comment>
<comment type="subunit">
    <text evidence="1">The nucleosome is a histone octamer containing two molecules each of H2A, H2B, H3 and H4 assembled in one H3-H4 heterotetramer and two H2A-H2B heterodimers. The octamer wraps approximately 147 bp of DNA (By similarity).</text>
</comment>
<comment type="subcellular location">
    <subcellularLocation>
        <location>Nucleus</location>
    </subcellularLocation>
    <subcellularLocation>
        <location>Chromosome</location>
    </subcellularLocation>
    <text>Associated with pericentromeric heterochromatin.</text>
</comment>
<comment type="developmental stage">
    <text evidence="3 5">Levels relative to total cellular protein, increase as differentiation proceeds towards the final culminant. The levels of tri-methylation of Lys-5 (H3K4me3) diminish considerably during the process of differentiation. In contrast, the level of mono-methylation of Lys-5 (H3K4me1) becomes significantly enhanced during differentiation. There is a slight dip in di-methylation of Lys-5 (H3K4me2) around the time of aggregation and the level of this mark again dips during the final stages of spore formation. The levels of H3K4me1 and H3K4me2 rise during the inactivation of rasG that occurs after the onset of differentiation. The level of dimethylation at this locus peaks coinciding with the loss of H3K4me3. This enrichment of dimethyl H3K4 declines as the rise in the level of H3K4me1 continues. H3K79me2 (di-methylation of Lys-80) is expressed during the whole life cycle.</text>
</comment>
<comment type="PTM">
    <text evidence="1">Acetylation is generally linked to gene activation.</text>
</comment>
<comment type="PTM">
    <text evidence="1">Different methylation states of H3K4 mark distinct developmental phases. H3K4me2 is associated with euchromatic regions. H3K4me3 is a mark of active chromatin. set1 is responsible for all mono-, di- and tri-methylation of H3K4. H3K4me facilitates subsequent acetylation of H3 and H4. Methylation at H3K9 is linked to gene repression (By similarity).</text>
</comment>
<comment type="PTM">
    <text evidence="1">H3S10ph, which is linked to gene activation, prevents methylation at H3K9 but facilitates acetylation of H3 and H4.</text>
</comment>
<comment type="similarity">
    <text evidence="6">Belongs to the histone H3 family.</text>
</comment>
<comment type="caution">
    <text evidence="6">To ensure consistency between histone entries, we follow the 'Brno' nomenclature for histone modifications, with positions referring to those used in the literature for the 'closest' model organism. Due to slight variations in histone sequences between organisms and to the presence of initiator methionine in UniProtKB/Swiss-Prot sequences, the actual positions of modified amino acids in the sequence generally differ. In this entry the following conventions are used: H3K4me1/2/3 = mono-, di- and trimethylated Lys-5; H3K9ac = acetylated Lys-10; H3K9me1 = monomethylated Lys-10; H3S10ph = phosphorylated Ser-11; H3K14ac = acetylated Lys-15; H3K14me2 = dimethylated Lys-15; H3K18ac = acetylated Lys-19; H3K18me1 = monomethylated Lys-19; H3K23ac = acetylated Lys-24; H3K23me1 = monomethylated Lys-24; H3K27ac = acetylated Lys-28; H3K27me1/2/3 = mono-, di- and trimethylated Lys-28; H3K36ac = acetylated Lys-37; H3K36me1/2/3 = mono-, di- and trimethylated Lys-37; H3K56ac = acetylated Lys-57; H3K64ac = acetylated Lys-68; H3K79me1/2/3 = mono-, di- and trimethylated Lys-80.</text>
</comment>
<proteinExistence type="evidence at protein level"/>
<evidence type="ECO:0000250" key="1"/>
<evidence type="ECO:0000256" key="2">
    <source>
        <dbReference type="SAM" id="MobiDB-lite"/>
    </source>
</evidence>
<evidence type="ECO:0000269" key="3">
    <source>
    </source>
</evidence>
<evidence type="ECO:0000269" key="4">
    <source>
    </source>
</evidence>
<evidence type="ECO:0000269" key="5">
    <source>
    </source>
</evidence>
<evidence type="ECO:0000305" key="6"/>
<keyword id="KW-0007">Acetylation</keyword>
<keyword id="KW-0158">Chromosome</keyword>
<keyword id="KW-0903">Direct protein sequencing</keyword>
<keyword id="KW-0238">DNA-binding</keyword>
<keyword id="KW-0488">Methylation</keyword>
<keyword id="KW-0544">Nucleosome core</keyword>
<keyword id="KW-0539">Nucleus</keyword>
<keyword id="KW-0597">Phosphoprotein</keyword>
<keyword id="KW-1185">Reference proteome</keyword>
<dbReference type="EMBL" id="AAFI02000005">
    <property type="protein sequence ID" value="EAL72896.1"/>
    <property type="molecule type" value="Genomic_DNA"/>
</dbReference>
<dbReference type="RefSeq" id="XP_646791.1">
    <property type="nucleotide sequence ID" value="XM_641699.1"/>
</dbReference>
<dbReference type="SMR" id="Q55BP0"/>
<dbReference type="FunCoup" id="Q55BP0">
    <property type="interactions" value="258"/>
</dbReference>
<dbReference type="STRING" id="44689.Q55BP0"/>
<dbReference type="iPTMnet" id="Q55BP0"/>
<dbReference type="PaxDb" id="44689-DDB0231141"/>
<dbReference type="EnsemblProtists" id="EAL72896">
    <property type="protein sequence ID" value="EAL72896"/>
    <property type="gene ID" value="DDB_G0271092"/>
</dbReference>
<dbReference type="GeneID" id="8617764"/>
<dbReference type="KEGG" id="ddi:DDB_G0271092"/>
<dbReference type="dictyBase" id="DDB_G0271092">
    <property type="gene designation" value="H3c"/>
</dbReference>
<dbReference type="VEuPathDB" id="AmoebaDB:DDB_G0271092"/>
<dbReference type="eggNOG" id="KOG1745">
    <property type="taxonomic scope" value="Eukaryota"/>
</dbReference>
<dbReference type="HOGENOM" id="CLU_078295_4_0_1"/>
<dbReference type="InParanoid" id="Q55BP0"/>
<dbReference type="OMA" id="THRFKPG"/>
<dbReference type="PhylomeDB" id="Q55BP0"/>
<dbReference type="PRO" id="PR:Q55BP0"/>
<dbReference type="Proteomes" id="UP000002195">
    <property type="component" value="Chromosome 1"/>
</dbReference>
<dbReference type="GO" id="GO:0000786">
    <property type="term" value="C:nucleosome"/>
    <property type="evidence" value="ECO:0007669"/>
    <property type="project" value="UniProtKB-KW"/>
</dbReference>
<dbReference type="GO" id="GO:0005634">
    <property type="term" value="C:nucleus"/>
    <property type="evidence" value="ECO:0000314"/>
    <property type="project" value="dictyBase"/>
</dbReference>
<dbReference type="GO" id="GO:0003677">
    <property type="term" value="F:DNA binding"/>
    <property type="evidence" value="ECO:0007669"/>
    <property type="project" value="UniProtKB-KW"/>
</dbReference>
<dbReference type="GO" id="GO:0046982">
    <property type="term" value="F:protein heterodimerization activity"/>
    <property type="evidence" value="ECO:0007669"/>
    <property type="project" value="InterPro"/>
</dbReference>
<dbReference type="GO" id="GO:0030527">
    <property type="term" value="F:structural constituent of chromatin"/>
    <property type="evidence" value="ECO:0007669"/>
    <property type="project" value="InterPro"/>
</dbReference>
<dbReference type="GO" id="GO:0019954">
    <property type="term" value="P:asexual reproduction"/>
    <property type="evidence" value="ECO:0000316"/>
    <property type="project" value="dictyBase"/>
</dbReference>
<dbReference type="GO" id="GO:0034644">
    <property type="term" value="P:cellular response to UV"/>
    <property type="evidence" value="ECO:0000316"/>
    <property type="project" value="dictyBase"/>
</dbReference>
<dbReference type="GO" id="GO:0040029">
    <property type="term" value="P:epigenetic regulation of gene expression"/>
    <property type="evidence" value="ECO:0000314"/>
    <property type="project" value="dictyBase"/>
</dbReference>
<dbReference type="CDD" id="cd22911">
    <property type="entry name" value="HFD_H3"/>
    <property type="match status" value="1"/>
</dbReference>
<dbReference type="FunFam" id="1.10.20.10:FF:000024">
    <property type="entry name" value="Histone H3"/>
    <property type="match status" value="1"/>
</dbReference>
<dbReference type="Gene3D" id="1.10.20.10">
    <property type="entry name" value="Histone, subunit A"/>
    <property type="match status" value="1"/>
</dbReference>
<dbReference type="InterPro" id="IPR009072">
    <property type="entry name" value="Histone-fold"/>
</dbReference>
<dbReference type="InterPro" id="IPR007125">
    <property type="entry name" value="Histone_H2A/H2B/H3"/>
</dbReference>
<dbReference type="InterPro" id="IPR000164">
    <property type="entry name" value="Histone_H3/CENP-A"/>
</dbReference>
<dbReference type="PANTHER" id="PTHR11426">
    <property type="entry name" value="HISTONE H3"/>
    <property type="match status" value="1"/>
</dbReference>
<dbReference type="Pfam" id="PF00125">
    <property type="entry name" value="Histone"/>
    <property type="match status" value="1"/>
</dbReference>
<dbReference type="PRINTS" id="PR00622">
    <property type="entry name" value="HISTONEH3"/>
</dbReference>
<dbReference type="SMART" id="SM00428">
    <property type="entry name" value="H3"/>
    <property type="match status" value="1"/>
</dbReference>
<dbReference type="SUPFAM" id="SSF47113">
    <property type="entry name" value="Histone-fold"/>
    <property type="match status" value="1"/>
</dbReference>
<dbReference type="PROSITE" id="PS00959">
    <property type="entry name" value="HISTONE_H3_2"/>
    <property type="match status" value="1"/>
</dbReference>
<protein>
    <recommendedName>
        <fullName>Histone H3.3 type c</fullName>
    </recommendedName>
    <alternativeName>
        <fullName>Histone 3, variant 3 type c</fullName>
    </alternativeName>
</protein>
<sequence length="136" mass="15601">MARTKQTARKSTGAKVPRKHLSSKSSFPSKPVNEVLKKTHRFRPGTVALREIRRYQKSSDLLIKKLPFQRLVREIAQEFKTDLRFQAAAIEALQEATEAYLVGLFEDTNLCAIHAKRVTIMVKDIQLARRIRGERA</sequence>
<reference key="1">
    <citation type="journal article" date="2005" name="Nature">
        <title>The genome of the social amoeba Dictyostelium discoideum.</title>
        <authorList>
            <person name="Eichinger L."/>
            <person name="Pachebat J.A."/>
            <person name="Gloeckner G."/>
            <person name="Rajandream M.A."/>
            <person name="Sucgang R."/>
            <person name="Berriman M."/>
            <person name="Song J."/>
            <person name="Olsen R."/>
            <person name="Szafranski K."/>
            <person name="Xu Q."/>
            <person name="Tunggal B."/>
            <person name="Kummerfeld S."/>
            <person name="Madera M."/>
            <person name="Konfortov B.A."/>
            <person name="Rivero F."/>
            <person name="Bankier A.T."/>
            <person name="Lehmann R."/>
            <person name="Hamlin N."/>
            <person name="Davies R."/>
            <person name="Gaudet P."/>
            <person name="Fey P."/>
            <person name="Pilcher K."/>
            <person name="Chen G."/>
            <person name="Saunders D."/>
            <person name="Sodergren E.J."/>
            <person name="Davis P."/>
            <person name="Kerhornou A."/>
            <person name="Nie X."/>
            <person name="Hall N."/>
            <person name="Anjard C."/>
            <person name="Hemphill L."/>
            <person name="Bason N."/>
            <person name="Farbrother P."/>
            <person name="Desany B."/>
            <person name="Just E."/>
            <person name="Morio T."/>
            <person name="Rost R."/>
            <person name="Churcher C.M."/>
            <person name="Cooper J."/>
            <person name="Haydock S."/>
            <person name="van Driessche N."/>
            <person name="Cronin A."/>
            <person name="Goodhead I."/>
            <person name="Muzny D.M."/>
            <person name="Mourier T."/>
            <person name="Pain A."/>
            <person name="Lu M."/>
            <person name="Harper D."/>
            <person name="Lindsay R."/>
            <person name="Hauser H."/>
            <person name="James K.D."/>
            <person name="Quiles M."/>
            <person name="Madan Babu M."/>
            <person name="Saito T."/>
            <person name="Buchrieser C."/>
            <person name="Wardroper A."/>
            <person name="Felder M."/>
            <person name="Thangavelu M."/>
            <person name="Johnson D."/>
            <person name="Knights A."/>
            <person name="Loulseged H."/>
            <person name="Mungall K.L."/>
            <person name="Oliver K."/>
            <person name="Price C."/>
            <person name="Quail M.A."/>
            <person name="Urushihara H."/>
            <person name="Hernandez J."/>
            <person name="Rabbinowitsch E."/>
            <person name="Steffen D."/>
            <person name="Sanders M."/>
            <person name="Ma J."/>
            <person name="Kohara Y."/>
            <person name="Sharp S."/>
            <person name="Simmonds M.N."/>
            <person name="Spiegler S."/>
            <person name="Tivey A."/>
            <person name="Sugano S."/>
            <person name="White B."/>
            <person name="Walker D."/>
            <person name="Woodward J.R."/>
            <person name="Winckler T."/>
            <person name="Tanaka Y."/>
            <person name="Shaulsky G."/>
            <person name="Schleicher M."/>
            <person name="Weinstock G.M."/>
            <person name="Rosenthal A."/>
            <person name="Cox E.C."/>
            <person name="Chisholm R.L."/>
            <person name="Gibbs R.A."/>
            <person name="Loomis W.F."/>
            <person name="Platzer M."/>
            <person name="Kay R.R."/>
            <person name="Williams J.G."/>
            <person name="Dear P.H."/>
            <person name="Noegel A.A."/>
            <person name="Barrell B.G."/>
            <person name="Kuspa A."/>
        </authorList>
    </citation>
    <scope>NUCLEOTIDE SEQUENCE [LARGE SCALE GENOMIC DNA]</scope>
    <source>
        <strain>AX4</strain>
    </source>
</reference>
<reference key="2">
    <citation type="journal article" date="1979" name="Biochemistry">
        <title>Purification and the histones of Dictyostelium discoideum chromatin.</title>
        <authorList>
            <person name="Bakke A.C."/>
            <person name="Bonner J."/>
        </authorList>
    </citation>
    <scope>PARTIAL PROTEIN SEQUENCE</scope>
</reference>
<reference key="3">
    <citation type="journal article" date="2006" name="Dev. Biol.">
        <title>Developmental timing in Dictyostelium is regulated by the Set1 histone methyltransferase.</title>
        <authorList>
            <person name="Chubb J.R."/>
            <person name="Bloomfield G."/>
            <person name="Xu Q."/>
            <person name="Kaller M."/>
            <person name="Ivens A."/>
            <person name="Skelton J."/>
            <person name="Turner B.M."/>
            <person name="Nellen W."/>
            <person name="Shaulsky G."/>
            <person name="Kay R.R."/>
            <person name="Bickmore W.A."/>
            <person name="Singer R.H."/>
        </authorList>
    </citation>
    <scope>FUNCTION</scope>
    <scope>NOMENCLATURE</scope>
    <scope>SUBCELLULAR LOCATION</scope>
    <scope>DEVELOPMENTAL STAGE</scope>
    <scope>METHYLATION AT LYS-5 BY SET1</scope>
</reference>
<reference key="4">
    <citation type="journal article" date="2006" name="Eukaryot. Cell">
        <title>Differential effects of heterochromatin protein 1 isoforms on mitotic chromosome distribution and growth in Dictyostelium discoideum.</title>
        <authorList>
            <person name="Kaller M."/>
            <person name="Euteneuer U."/>
            <person name="Nellen W."/>
        </authorList>
    </citation>
    <scope>METHYLATION AT LYS-10</scope>
    <scope>SUBCELLULAR LOCATION</scope>
</reference>
<reference key="5">
    <citation type="journal article" date="2011" name="Biochem. Biophys. Res. Commun.">
        <title>The histone methyltransferase Dot1 is required for DNA damage repair and proper development in Dictyostelium.</title>
        <authorList>
            <person name="Muller-Taubenberger A."/>
            <person name="Bonisch C."/>
            <person name="Furbringer M."/>
            <person name="Wittek F."/>
            <person name="Hake S.B."/>
        </authorList>
    </citation>
    <scope>METHYLATION AT LYS-80</scope>
    <scope>SUBCELLULAR LOCATION</scope>
    <scope>DEVELOPMENTAL STAGE</scope>
    <source>
        <strain>AX2</strain>
    </source>
</reference>
<name>H33C_DICDI</name>
<organism>
    <name type="scientific">Dictyostelium discoideum</name>
    <name type="common">Social amoeba</name>
    <dbReference type="NCBI Taxonomy" id="44689"/>
    <lineage>
        <taxon>Eukaryota</taxon>
        <taxon>Amoebozoa</taxon>
        <taxon>Evosea</taxon>
        <taxon>Eumycetozoa</taxon>
        <taxon>Dictyostelia</taxon>
        <taxon>Dictyosteliales</taxon>
        <taxon>Dictyosteliaceae</taxon>
        <taxon>Dictyostelium</taxon>
    </lineage>
</organism>
<gene>
    <name type="primary">H3c</name>
    <name type="ORF">DDB_G0271092</name>
</gene>
<accession>Q55BP0</accession>
<feature type="initiator methionine" description="Removed" evidence="1">
    <location>
        <position position="1"/>
    </location>
</feature>
<feature type="chain" id="PRO_0000389162" description="Histone H3.3 type c">
    <location>
        <begin position="2"/>
        <end position="136"/>
    </location>
</feature>
<feature type="region of interest" description="Disordered" evidence="2">
    <location>
        <begin position="1"/>
        <end position="30"/>
    </location>
</feature>
<feature type="modified residue" description="N6,N6,N6-trimethyllysine; by set1; alternate" evidence="3">
    <location>
        <position position="5"/>
    </location>
</feature>
<feature type="modified residue" description="N6,N6-dimethyllysine; by set1; alternate" evidence="3">
    <location>
        <position position="5"/>
    </location>
</feature>
<feature type="modified residue" description="N6-acetyllysine; alternate" evidence="1">
    <location>
        <position position="5"/>
    </location>
</feature>
<feature type="modified residue" description="N6-methyllysine; by set1; alternate" evidence="3">
    <location>
        <position position="5"/>
    </location>
</feature>
<feature type="modified residue" description="N6,N6,N6-trimethyllysine; alternate" evidence="1">
    <location>
        <position position="10"/>
    </location>
</feature>
<feature type="modified residue" description="N6,N6-dimethyllysine; alternate" evidence="4">
    <location>
        <position position="10"/>
    </location>
</feature>
<feature type="modified residue" description="N6-acetyllysine; alternate" evidence="1">
    <location>
        <position position="10"/>
    </location>
</feature>
<feature type="modified residue" description="N6-methyllysine; alternate" evidence="1">
    <location>
        <position position="10"/>
    </location>
</feature>
<feature type="modified residue" description="Phosphoserine" evidence="1">
    <location>
        <position position="11"/>
    </location>
</feature>
<feature type="modified residue" description="N6-acetyllysine" evidence="1">
    <location>
        <position position="15"/>
    </location>
</feature>
<feature type="modified residue" description="N6-acetyllysine; alternate" evidence="1">
    <location>
        <position position="19"/>
    </location>
</feature>
<feature type="modified residue" description="N6-methyllysine; alternate" evidence="1">
    <location>
        <position position="19"/>
    </location>
</feature>
<feature type="modified residue" description="N6-acetyllysine; alternate" evidence="1">
    <location>
        <position position="24"/>
    </location>
</feature>
<feature type="modified residue" description="N6-methyllysine; alternate" evidence="1">
    <location>
        <position position="24"/>
    </location>
</feature>
<feature type="modified residue" description="N6,N6,N6-trimethyllysine; alternate" evidence="1">
    <location>
        <position position="37"/>
    </location>
</feature>
<feature type="modified residue" description="N6,N6-dimethyllysine; alternate" evidence="1">
    <location>
        <position position="37"/>
    </location>
</feature>
<feature type="modified residue" description="N6-acetyllysine; alternate" evidence="1">
    <location>
        <position position="37"/>
    </location>
</feature>
<feature type="modified residue" description="N6-methyllysine; alternate" evidence="1">
    <location>
        <position position="37"/>
    </location>
</feature>
<feature type="modified residue" description="N6-acetyllysine" evidence="1">
    <location>
        <position position="57"/>
    </location>
</feature>
<feature type="modified residue" description="N6,N6,N6-trimethyllysine; alternate" evidence="1">
    <location>
        <position position="80"/>
    </location>
</feature>
<feature type="modified residue" description="N6,N6-dimethyllysine; alternate" evidence="5">
    <location>
        <position position="80"/>
    </location>
</feature>
<feature type="modified residue" description="N6-methyllysine; alternate" evidence="1">
    <location>
        <position position="80"/>
    </location>
</feature>